<gene>
    <name evidence="1" type="primary">ribB</name>
    <name type="ordered locus">SFV_3085</name>
</gene>
<keyword id="KW-0456">Lyase</keyword>
<keyword id="KW-0460">Magnesium</keyword>
<keyword id="KW-0464">Manganese</keyword>
<keyword id="KW-0479">Metal-binding</keyword>
<keyword id="KW-0686">Riboflavin biosynthesis</keyword>
<feature type="chain" id="PRO_1000040636" description="3,4-dihydroxy-2-butanone 4-phosphate synthase">
    <location>
        <begin position="1"/>
        <end position="217"/>
    </location>
</feature>
<feature type="binding site" evidence="1">
    <location>
        <begin position="37"/>
        <end position="38"/>
    </location>
    <ligand>
        <name>D-ribulose 5-phosphate</name>
        <dbReference type="ChEBI" id="CHEBI:58121"/>
    </ligand>
</feature>
<feature type="binding site" evidence="1">
    <location>
        <position position="38"/>
    </location>
    <ligand>
        <name>Mg(2+)</name>
        <dbReference type="ChEBI" id="CHEBI:18420"/>
        <label>1</label>
    </ligand>
</feature>
<feature type="binding site" evidence="1">
    <location>
        <position position="38"/>
    </location>
    <ligand>
        <name>Mg(2+)</name>
        <dbReference type="ChEBI" id="CHEBI:18420"/>
        <label>2</label>
    </ligand>
</feature>
<feature type="binding site" evidence="1">
    <location>
        <position position="42"/>
    </location>
    <ligand>
        <name>D-ribulose 5-phosphate</name>
        <dbReference type="ChEBI" id="CHEBI:58121"/>
    </ligand>
</feature>
<feature type="binding site" evidence="1">
    <location>
        <begin position="150"/>
        <end position="154"/>
    </location>
    <ligand>
        <name>D-ribulose 5-phosphate</name>
        <dbReference type="ChEBI" id="CHEBI:58121"/>
    </ligand>
</feature>
<feature type="binding site" evidence="1">
    <location>
        <position position="153"/>
    </location>
    <ligand>
        <name>Mg(2+)</name>
        <dbReference type="ChEBI" id="CHEBI:18420"/>
        <label>2</label>
    </ligand>
</feature>
<feature type="binding site" evidence="1">
    <location>
        <position position="174"/>
    </location>
    <ligand>
        <name>D-ribulose 5-phosphate</name>
        <dbReference type="ChEBI" id="CHEBI:58121"/>
    </ligand>
</feature>
<feature type="site" description="Essential for catalytic activity" evidence="1">
    <location>
        <position position="136"/>
    </location>
</feature>
<feature type="site" description="Essential for catalytic activity" evidence="1">
    <location>
        <position position="174"/>
    </location>
</feature>
<sequence length="217" mass="23353">MNQTLLSSFGTPFERVENALAALREGRGVMVLDDEDRENEGDMIFPAETMTVEQMALTIRHGSGIVCLCITEDRRKQLDLPMMVENNTSAYGTGFTVTIEAAEGVTTGVSAADRITTVRAAIADGAKPSDLNRPGHVFPLRAQAGGVLTRGGHTEATIDLMTLAGFKPAGVLCELTNDDGTMARAPECIEFANKHNMALVTIEDLVAYRQAHERKAS</sequence>
<name>RIBB_SHIF8</name>
<comment type="function">
    <text evidence="1">Catalyzes the conversion of D-ribulose 5-phosphate to formate and 3,4-dihydroxy-2-butanone 4-phosphate.</text>
</comment>
<comment type="catalytic activity">
    <reaction evidence="1">
        <text>D-ribulose 5-phosphate = (2S)-2-hydroxy-3-oxobutyl phosphate + formate + H(+)</text>
        <dbReference type="Rhea" id="RHEA:18457"/>
        <dbReference type="ChEBI" id="CHEBI:15378"/>
        <dbReference type="ChEBI" id="CHEBI:15740"/>
        <dbReference type="ChEBI" id="CHEBI:58121"/>
        <dbReference type="ChEBI" id="CHEBI:58830"/>
        <dbReference type="EC" id="4.1.99.12"/>
    </reaction>
</comment>
<comment type="cofactor">
    <cofactor evidence="1">
        <name>Mg(2+)</name>
        <dbReference type="ChEBI" id="CHEBI:18420"/>
    </cofactor>
    <cofactor evidence="1">
        <name>Mn(2+)</name>
        <dbReference type="ChEBI" id="CHEBI:29035"/>
    </cofactor>
    <text evidence="1">Binds 2 divalent metal cations per subunit. Magnesium or manganese.</text>
</comment>
<comment type="pathway">
    <text evidence="1">Cofactor biosynthesis; riboflavin biosynthesis; 2-hydroxy-3-oxobutyl phosphate from D-ribulose 5-phosphate: step 1/1.</text>
</comment>
<comment type="subunit">
    <text evidence="1">Homodimer.</text>
</comment>
<comment type="similarity">
    <text evidence="1">Belongs to the DHBP synthase family.</text>
</comment>
<organism>
    <name type="scientific">Shigella flexneri serotype 5b (strain 8401)</name>
    <dbReference type="NCBI Taxonomy" id="373384"/>
    <lineage>
        <taxon>Bacteria</taxon>
        <taxon>Pseudomonadati</taxon>
        <taxon>Pseudomonadota</taxon>
        <taxon>Gammaproteobacteria</taxon>
        <taxon>Enterobacterales</taxon>
        <taxon>Enterobacteriaceae</taxon>
        <taxon>Shigella</taxon>
    </lineage>
</organism>
<accession>Q0T0L7</accession>
<dbReference type="EC" id="4.1.99.12" evidence="1"/>
<dbReference type="EMBL" id="CP000266">
    <property type="protein sequence ID" value="ABF05148.1"/>
    <property type="molecule type" value="Genomic_DNA"/>
</dbReference>
<dbReference type="RefSeq" id="WP_001076997.1">
    <property type="nucleotide sequence ID" value="NC_008258.1"/>
</dbReference>
<dbReference type="SMR" id="Q0T0L7"/>
<dbReference type="GeneID" id="93778953"/>
<dbReference type="KEGG" id="sfv:SFV_3085"/>
<dbReference type="HOGENOM" id="CLU_020273_3_0_6"/>
<dbReference type="UniPathway" id="UPA00275">
    <property type="reaction ID" value="UER00399"/>
</dbReference>
<dbReference type="Proteomes" id="UP000000659">
    <property type="component" value="Chromosome"/>
</dbReference>
<dbReference type="GO" id="GO:0005829">
    <property type="term" value="C:cytosol"/>
    <property type="evidence" value="ECO:0007669"/>
    <property type="project" value="TreeGrafter"/>
</dbReference>
<dbReference type="GO" id="GO:0008686">
    <property type="term" value="F:3,4-dihydroxy-2-butanone-4-phosphate synthase activity"/>
    <property type="evidence" value="ECO:0007669"/>
    <property type="project" value="UniProtKB-UniRule"/>
</dbReference>
<dbReference type="GO" id="GO:0000287">
    <property type="term" value="F:magnesium ion binding"/>
    <property type="evidence" value="ECO:0007669"/>
    <property type="project" value="UniProtKB-UniRule"/>
</dbReference>
<dbReference type="GO" id="GO:0030145">
    <property type="term" value="F:manganese ion binding"/>
    <property type="evidence" value="ECO:0007669"/>
    <property type="project" value="UniProtKB-UniRule"/>
</dbReference>
<dbReference type="GO" id="GO:0009231">
    <property type="term" value="P:riboflavin biosynthetic process"/>
    <property type="evidence" value="ECO:0007669"/>
    <property type="project" value="UniProtKB-UniRule"/>
</dbReference>
<dbReference type="FunFam" id="3.90.870.10:FF:000002">
    <property type="entry name" value="3,4-dihydroxy-2-butanone 4-phosphate synthase"/>
    <property type="match status" value="1"/>
</dbReference>
<dbReference type="Gene3D" id="3.90.870.10">
    <property type="entry name" value="DHBP synthase"/>
    <property type="match status" value="1"/>
</dbReference>
<dbReference type="HAMAP" id="MF_00180">
    <property type="entry name" value="RibB"/>
    <property type="match status" value="1"/>
</dbReference>
<dbReference type="InterPro" id="IPR017945">
    <property type="entry name" value="DHBP_synth_RibB-like_a/b_dom"/>
</dbReference>
<dbReference type="InterPro" id="IPR000422">
    <property type="entry name" value="DHBP_synthase_RibB"/>
</dbReference>
<dbReference type="NCBIfam" id="TIGR00506">
    <property type="entry name" value="ribB"/>
    <property type="match status" value="1"/>
</dbReference>
<dbReference type="PANTHER" id="PTHR21327:SF38">
    <property type="entry name" value="3,4-DIHYDROXY-2-BUTANONE 4-PHOSPHATE SYNTHASE"/>
    <property type="match status" value="1"/>
</dbReference>
<dbReference type="PANTHER" id="PTHR21327">
    <property type="entry name" value="GTP CYCLOHYDROLASE II-RELATED"/>
    <property type="match status" value="1"/>
</dbReference>
<dbReference type="Pfam" id="PF00926">
    <property type="entry name" value="DHBP_synthase"/>
    <property type="match status" value="1"/>
</dbReference>
<dbReference type="SUPFAM" id="SSF55821">
    <property type="entry name" value="YrdC/RibB"/>
    <property type="match status" value="1"/>
</dbReference>
<evidence type="ECO:0000255" key="1">
    <source>
        <dbReference type="HAMAP-Rule" id="MF_00180"/>
    </source>
</evidence>
<reference key="1">
    <citation type="journal article" date="2006" name="BMC Genomics">
        <title>Complete genome sequence of Shigella flexneri 5b and comparison with Shigella flexneri 2a.</title>
        <authorList>
            <person name="Nie H."/>
            <person name="Yang F."/>
            <person name="Zhang X."/>
            <person name="Yang J."/>
            <person name="Chen L."/>
            <person name="Wang J."/>
            <person name="Xiong Z."/>
            <person name="Peng J."/>
            <person name="Sun L."/>
            <person name="Dong J."/>
            <person name="Xue Y."/>
            <person name="Xu X."/>
            <person name="Chen S."/>
            <person name="Yao Z."/>
            <person name="Shen Y."/>
            <person name="Jin Q."/>
        </authorList>
    </citation>
    <scope>NUCLEOTIDE SEQUENCE [LARGE SCALE GENOMIC DNA]</scope>
    <source>
        <strain>8401</strain>
    </source>
</reference>
<proteinExistence type="inferred from homology"/>
<protein>
    <recommendedName>
        <fullName evidence="1">3,4-dihydroxy-2-butanone 4-phosphate synthase</fullName>
        <shortName evidence="1">DHBP synthase</shortName>
        <ecNumber evidence="1">4.1.99.12</ecNumber>
    </recommendedName>
</protein>